<evidence type="ECO:0000255" key="1">
    <source>
        <dbReference type="HAMAP-Rule" id="MF_00776"/>
    </source>
</evidence>
<keyword id="KW-0963">Cytoplasm</keyword>
<keyword id="KW-0520">NAD</keyword>
<keyword id="KW-0560">Oxidoreductase</keyword>
<keyword id="KW-1185">Reference proteome</keyword>
<comment type="catalytic activity">
    <reaction evidence="1">
        <text>glycolate + NAD(+) = glyoxylate + NADH + H(+)</text>
        <dbReference type="Rhea" id="RHEA:18229"/>
        <dbReference type="ChEBI" id="CHEBI:15378"/>
        <dbReference type="ChEBI" id="CHEBI:29805"/>
        <dbReference type="ChEBI" id="CHEBI:36655"/>
        <dbReference type="ChEBI" id="CHEBI:57540"/>
        <dbReference type="ChEBI" id="CHEBI:57945"/>
        <dbReference type="EC" id="1.1.1.26"/>
    </reaction>
</comment>
<comment type="subunit">
    <text evidence="1">Homodimer.</text>
</comment>
<comment type="subcellular location">
    <subcellularLocation>
        <location evidence="1">Cytoplasm</location>
    </subcellularLocation>
</comment>
<comment type="similarity">
    <text evidence="1">Belongs to the D-isomer specific 2-hydroxyacid dehydrogenase family. GyaR subfamily.</text>
</comment>
<dbReference type="EC" id="1.1.1.26" evidence="1"/>
<dbReference type="EMBL" id="BA000002">
    <property type="protein sequence ID" value="BAA80834.2"/>
    <property type="molecule type" value="Genomic_DNA"/>
</dbReference>
<dbReference type="PIR" id="E72568">
    <property type="entry name" value="E72568"/>
</dbReference>
<dbReference type="RefSeq" id="WP_010866622.1">
    <property type="nucleotide sequence ID" value="NC_000854.2"/>
</dbReference>
<dbReference type="SMR" id="Q9YAW4"/>
<dbReference type="STRING" id="272557.APE_1831.1"/>
<dbReference type="EnsemblBacteria" id="BAA80834">
    <property type="protein sequence ID" value="BAA80834"/>
    <property type="gene ID" value="APE_1831.1"/>
</dbReference>
<dbReference type="GeneID" id="1446271"/>
<dbReference type="KEGG" id="ape:APE_1831.1"/>
<dbReference type="PATRIC" id="fig|272557.25.peg.1228"/>
<dbReference type="eggNOG" id="arCOG01755">
    <property type="taxonomic scope" value="Archaea"/>
</dbReference>
<dbReference type="Proteomes" id="UP000002518">
    <property type="component" value="Chromosome"/>
</dbReference>
<dbReference type="GO" id="GO:0005829">
    <property type="term" value="C:cytosol"/>
    <property type="evidence" value="ECO:0007669"/>
    <property type="project" value="TreeGrafter"/>
</dbReference>
<dbReference type="GO" id="GO:0047964">
    <property type="term" value="F:glyoxylate reductase (NADH) activity"/>
    <property type="evidence" value="ECO:0007669"/>
    <property type="project" value="UniProtKB-UniRule"/>
</dbReference>
<dbReference type="GO" id="GO:0030267">
    <property type="term" value="F:glyoxylate reductase (NADPH) activity"/>
    <property type="evidence" value="ECO:0007669"/>
    <property type="project" value="TreeGrafter"/>
</dbReference>
<dbReference type="GO" id="GO:0016618">
    <property type="term" value="F:hydroxypyruvate reductase [NAD(P)H] activity"/>
    <property type="evidence" value="ECO:0007669"/>
    <property type="project" value="TreeGrafter"/>
</dbReference>
<dbReference type="GO" id="GO:0051287">
    <property type="term" value="F:NAD binding"/>
    <property type="evidence" value="ECO:0007669"/>
    <property type="project" value="InterPro"/>
</dbReference>
<dbReference type="CDD" id="cd05301">
    <property type="entry name" value="GDH"/>
    <property type="match status" value="1"/>
</dbReference>
<dbReference type="FunFam" id="3.40.50.720:FF:000462">
    <property type="entry name" value="Glyoxylate reductase (NADP+)"/>
    <property type="match status" value="1"/>
</dbReference>
<dbReference type="Gene3D" id="3.40.50.720">
    <property type="entry name" value="NAD(P)-binding Rossmann-like Domain"/>
    <property type="match status" value="2"/>
</dbReference>
<dbReference type="HAMAP" id="MF_00776">
    <property type="entry name" value="GyaR"/>
    <property type="match status" value="1"/>
</dbReference>
<dbReference type="InterPro" id="IPR050223">
    <property type="entry name" value="D-isomer_2-hydroxyacid_DH"/>
</dbReference>
<dbReference type="InterPro" id="IPR006139">
    <property type="entry name" value="D-isomer_2_OHA_DH_cat_dom"/>
</dbReference>
<dbReference type="InterPro" id="IPR029753">
    <property type="entry name" value="D-isomer_DH_CS"/>
</dbReference>
<dbReference type="InterPro" id="IPR029752">
    <property type="entry name" value="D-isomer_DH_CS1"/>
</dbReference>
<dbReference type="InterPro" id="IPR006140">
    <property type="entry name" value="D-isomer_DH_NAD-bd"/>
</dbReference>
<dbReference type="InterPro" id="IPR023519">
    <property type="entry name" value="Glyoxylate_reductase_GyaR"/>
</dbReference>
<dbReference type="InterPro" id="IPR036291">
    <property type="entry name" value="NAD(P)-bd_dom_sf"/>
</dbReference>
<dbReference type="NCBIfam" id="NF009714">
    <property type="entry name" value="PRK13243.1"/>
    <property type="match status" value="1"/>
</dbReference>
<dbReference type="PANTHER" id="PTHR10996">
    <property type="entry name" value="2-HYDROXYACID DEHYDROGENASE-RELATED"/>
    <property type="match status" value="1"/>
</dbReference>
<dbReference type="PANTHER" id="PTHR10996:SF283">
    <property type="entry name" value="GLYOXYLATE_HYDROXYPYRUVATE REDUCTASE B"/>
    <property type="match status" value="1"/>
</dbReference>
<dbReference type="Pfam" id="PF00389">
    <property type="entry name" value="2-Hacid_dh"/>
    <property type="match status" value="1"/>
</dbReference>
<dbReference type="Pfam" id="PF02826">
    <property type="entry name" value="2-Hacid_dh_C"/>
    <property type="match status" value="1"/>
</dbReference>
<dbReference type="SUPFAM" id="SSF52283">
    <property type="entry name" value="Formate/glycerate dehydrogenase catalytic domain-like"/>
    <property type="match status" value="1"/>
</dbReference>
<dbReference type="SUPFAM" id="SSF51735">
    <property type="entry name" value="NAD(P)-binding Rossmann-fold domains"/>
    <property type="match status" value="1"/>
</dbReference>
<dbReference type="PROSITE" id="PS00065">
    <property type="entry name" value="D_2_HYDROXYACID_DH_1"/>
    <property type="match status" value="1"/>
</dbReference>
<dbReference type="PROSITE" id="PS00670">
    <property type="entry name" value="D_2_HYDROXYACID_DH_2"/>
    <property type="match status" value="1"/>
</dbReference>
<dbReference type="PROSITE" id="PS00671">
    <property type="entry name" value="D_2_HYDROXYACID_DH_3"/>
    <property type="match status" value="1"/>
</dbReference>
<feature type="chain" id="PRO_0000075946" description="Glyoxylate reductase">
    <location>
        <begin position="1"/>
        <end position="335"/>
    </location>
</feature>
<feature type="active site" evidence="1">
    <location>
        <position position="242"/>
    </location>
</feature>
<feature type="active site" evidence="1">
    <location>
        <position position="271"/>
    </location>
</feature>
<feature type="active site" description="Proton donor" evidence="1">
    <location>
        <position position="290"/>
    </location>
</feature>
<feature type="binding site" evidence="1">
    <location>
        <begin position="159"/>
        <end position="162"/>
    </location>
    <ligand>
        <name>NADP(+)</name>
        <dbReference type="ChEBI" id="CHEBI:58349"/>
    </ligand>
</feature>
<feature type="binding site" evidence="1">
    <location>
        <begin position="181"/>
        <end position="183"/>
    </location>
    <ligand>
        <name>NADP(+)</name>
        <dbReference type="ChEBI" id="CHEBI:58349"/>
    </ligand>
</feature>
<feature type="binding site" evidence="1">
    <location>
        <begin position="240"/>
        <end position="242"/>
    </location>
    <ligand>
        <name>NADP(+)</name>
        <dbReference type="ChEBI" id="CHEBI:58349"/>
    </ligand>
</feature>
<feature type="binding site" evidence="1">
    <location>
        <begin position="290"/>
        <end position="292"/>
    </location>
    <ligand>
        <name>NADP(+)</name>
        <dbReference type="ChEBI" id="CHEBI:58349"/>
    </ligand>
</feature>
<reference key="1">
    <citation type="journal article" date="1999" name="DNA Res.">
        <title>Complete genome sequence of an aerobic hyper-thermophilic crenarchaeon, Aeropyrum pernix K1.</title>
        <authorList>
            <person name="Kawarabayasi Y."/>
            <person name="Hino Y."/>
            <person name="Horikawa H."/>
            <person name="Yamazaki S."/>
            <person name="Haikawa Y."/>
            <person name="Jin-no K."/>
            <person name="Takahashi M."/>
            <person name="Sekine M."/>
            <person name="Baba S."/>
            <person name="Ankai A."/>
            <person name="Kosugi H."/>
            <person name="Hosoyama A."/>
            <person name="Fukui S."/>
            <person name="Nagai Y."/>
            <person name="Nishijima K."/>
            <person name="Nakazawa H."/>
            <person name="Takamiya M."/>
            <person name="Masuda S."/>
            <person name="Funahashi T."/>
            <person name="Tanaka T."/>
            <person name="Kudoh Y."/>
            <person name="Yamazaki J."/>
            <person name="Kushida N."/>
            <person name="Oguchi A."/>
            <person name="Aoki K."/>
            <person name="Kubota K."/>
            <person name="Nakamura Y."/>
            <person name="Nomura N."/>
            <person name="Sako Y."/>
            <person name="Kikuchi H."/>
        </authorList>
    </citation>
    <scope>NUCLEOTIDE SEQUENCE [LARGE SCALE GENOMIC DNA]</scope>
    <source>
        <strain>ATCC 700893 / DSM 11879 / JCM 9820 / NBRC 100138 / K1</strain>
    </source>
</reference>
<accession>Q9YAW4</accession>
<sequence length="335" mass="37757">MKRPRVFVTREVFPEALELLSKYYDVEVWDKYQPPPYETLLSKAREADALYTLLTDRIDCDLLSQAPRLRIVAQMAVGFDNIDVECATRLGIYVTNTPGVLTEATAEFTWALILAAARRVVEADHFVRWGEWWRLRTGWHPMMMLGVELRGKTLGILGMGRIGSRVAEIGKAFGMRIIYHSRSRKREIEKELGAEYRSLEDLLRESDILSIHLPLTDETRHLIGESELKLMKKTAILVNTGRGAIVDTGALVKALREGWIAAAALDVFEEEPLNPNHPLTAFKNVVLAPHAASATRETRLRMAMMAAENLVAFAQGKVPPNLVNREVVKVRQPGF</sequence>
<organism>
    <name type="scientific">Aeropyrum pernix (strain ATCC 700893 / DSM 11879 / JCM 9820 / NBRC 100138 / K1)</name>
    <dbReference type="NCBI Taxonomy" id="272557"/>
    <lineage>
        <taxon>Archaea</taxon>
        <taxon>Thermoproteota</taxon>
        <taxon>Thermoprotei</taxon>
        <taxon>Desulfurococcales</taxon>
        <taxon>Desulfurococcaceae</taxon>
        <taxon>Aeropyrum</taxon>
    </lineage>
</organism>
<protein>
    <recommendedName>
        <fullName evidence="1">Glyoxylate reductase</fullName>
        <ecNumber evidence="1">1.1.1.26</ecNumber>
    </recommendedName>
</protein>
<name>GYAR_AERPE</name>
<gene>
    <name evidence="1" type="primary">gyaR</name>
    <name type="ordered locus">APE_1831.1</name>
</gene>
<proteinExistence type="inferred from homology"/>